<reference key="1">
    <citation type="journal article" date="2008" name="J. Bacteriol.">
        <title>The complete genome sequence of Escherichia coli DH10B: insights into the biology of a laboratory workhorse.</title>
        <authorList>
            <person name="Durfee T."/>
            <person name="Nelson R."/>
            <person name="Baldwin S."/>
            <person name="Plunkett G. III"/>
            <person name="Burland V."/>
            <person name="Mau B."/>
            <person name="Petrosino J.F."/>
            <person name="Qin X."/>
            <person name="Muzny D.M."/>
            <person name="Ayele M."/>
            <person name="Gibbs R.A."/>
            <person name="Csorgo B."/>
            <person name="Posfai G."/>
            <person name="Weinstock G.M."/>
            <person name="Blattner F.R."/>
        </authorList>
    </citation>
    <scope>NUCLEOTIDE SEQUENCE [LARGE SCALE GENOMIC DNA]</scope>
    <source>
        <strain>K12 / DH10B</strain>
    </source>
</reference>
<dbReference type="EMBL" id="CP000948">
    <property type="protein sequence ID" value="ACB01516.1"/>
    <property type="molecule type" value="Genomic_DNA"/>
</dbReference>
<dbReference type="RefSeq" id="WP_000158159.1">
    <property type="nucleotide sequence ID" value="NC_010473.1"/>
</dbReference>
<dbReference type="KEGG" id="ecd:ECDH10B_0344"/>
<dbReference type="HOGENOM" id="CLU_106619_2_1_6"/>
<dbReference type="CDD" id="cd18720">
    <property type="entry name" value="PIN_YqxD-like"/>
    <property type="match status" value="1"/>
</dbReference>
<dbReference type="HAMAP" id="MF_00489">
    <property type="entry name" value="UPF0178"/>
    <property type="match status" value="1"/>
</dbReference>
<dbReference type="InterPro" id="IPR003791">
    <property type="entry name" value="UPF0178"/>
</dbReference>
<dbReference type="NCBIfam" id="NF001095">
    <property type="entry name" value="PRK00124.1"/>
    <property type="match status" value="1"/>
</dbReference>
<dbReference type="PANTHER" id="PTHR35146">
    <property type="entry name" value="UPF0178 PROTEIN YAII"/>
    <property type="match status" value="1"/>
</dbReference>
<dbReference type="PANTHER" id="PTHR35146:SF1">
    <property type="entry name" value="UPF0178 PROTEIN YAII"/>
    <property type="match status" value="1"/>
</dbReference>
<dbReference type="Pfam" id="PF02639">
    <property type="entry name" value="DUF188"/>
    <property type="match status" value="1"/>
</dbReference>
<protein>
    <recommendedName>
        <fullName evidence="1">UPF0178 protein YaiI</fullName>
    </recommendedName>
</protein>
<sequence>MTIWVDADACPNVIKEILYRAAERMQMPLVLVANQSLRVPPSRFIRTLRVAAGFDVADNEIVRQCEAGDLVITADIPLAAEAIEKGAAALNPRGERYTPATIRERLTMRDFMDTLRASGIQTGGPDSLSQRDRQAFAAELEKWWLEVQRSRG</sequence>
<organism>
    <name type="scientific">Escherichia coli (strain K12 / DH10B)</name>
    <dbReference type="NCBI Taxonomy" id="316385"/>
    <lineage>
        <taxon>Bacteria</taxon>
        <taxon>Pseudomonadati</taxon>
        <taxon>Pseudomonadota</taxon>
        <taxon>Gammaproteobacteria</taxon>
        <taxon>Enterobacterales</taxon>
        <taxon>Enterobacteriaceae</taxon>
        <taxon>Escherichia</taxon>
    </lineage>
</organism>
<accession>B1XEX6</accession>
<feature type="chain" id="PRO_1000126188" description="UPF0178 protein YaiI">
    <location>
        <begin position="1"/>
        <end position="152"/>
    </location>
</feature>
<proteinExistence type="inferred from homology"/>
<gene>
    <name evidence="1" type="primary">yaiI</name>
    <name type="ordered locus">ECDH10B_0344</name>
</gene>
<comment type="similarity">
    <text evidence="1">Belongs to the UPF0178 family.</text>
</comment>
<evidence type="ECO:0000255" key="1">
    <source>
        <dbReference type="HAMAP-Rule" id="MF_00489"/>
    </source>
</evidence>
<name>YAII_ECODH</name>